<sequence length="173" mass="19186">MSEQLVAVGVLSRPHGIKGEIRLIRYTDSIDVFLGEVFLQKSNSLPKKAEIISSRIHQGVALVCFKGFSDRSAVEVLRGQTLLVSRSFLPEIESNESYLCDLLGFSVVLDNTDEVIGKLEYVSFPGGQELWSIITPEGKEVLLPAIPEFVLEVDTNAQLIRINPPKGLLELYK</sequence>
<gene>
    <name evidence="1" type="primary">rimM</name>
    <name type="ordered locus">LI0573</name>
</gene>
<organism>
    <name type="scientific">Lawsonia intracellularis (strain PHE/MN1-00)</name>
    <dbReference type="NCBI Taxonomy" id="363253"/>
    <lineage>
        <taxon>Bacteria</taxon>
        <taxon>Pseudomonadati</taxon>
        <taxon>Thermodesulfobacteriota</taxon>
        <taxon>Desulfovibrionia</taxon>
        <taxon>Desulfovibrionales</taxon>
        <taxon>Desulfovibrionaceae</taxon>
        <taxon>Lawsonia</taxon>
    </lineage>
</organism>
<keyword id="KW-0143">Chaperone</keyword>
<keyword id="KW-0963">Cytoplasm</keyword>
<keyword id="KW-1185">Reference proteome</keyword>
<keyword id="KW-0690">Ribosome biogenesis</keyword>
<keyword id="KW-0698">rRNA processing</keyword>
<evidence type="ECO:0000255" key="1">
    <source>
        <dbReference type="HAMAP-Rule" id="MF_00014"/>
    </source>
</evidence>
<dbReference type="EMBL" id="AM180252">
    <property type="protein sequence ID" value="CAJ54627.1"/>
    <property type="molecule type" value="Genomic_DNA"/>
</dbReference>
<dbReference type="RefSeq" id="WP_011526656.1">
    <property type="nucleotide sequence ID" value="NC_008011.1"/>
</dbReference>
<dbReference type="SMR" id="Q1MQV0"/>
<dbReference type="STRING" id="363253.LI0573"/>
<dbReference type="KEGG" id="lip:LI0573"/>
<dbReference type="eggNOG" id="COG0806">
    <property type="taxonomic scope" value="Bacteria"/>
</dbReference>
<dbReference type="HOGENOM" id="CLU_077636_3_2_7"/>
<dbReference type="OrthoDB" id="5381335at2"/>
<dbReference type="Proteomes" id="UP000002430">
    <property type="component" value="Chromosome"/>
</dbReference>
<dbReference type="GO" id="GO:0005737">
    <property type="term" value="C:cytoplasm"/>
    <property type="evidence" value="ECO:0007669"/>
    <property type="project" value="UniProtKB-SubCell"/>
</dbReference>
<dbReference type="GO" id="GO:0005840">
    <property type="term" value="C:ribosome"/>
    <property type="evidence" value="ECO:0007669"/>
    <property type="project" value="InterPro"/>
</dbReference>
<dbReference type="GO" id="GO:0043022">
    <property type="term" value="F:ribosome binding"/>
    <property type="evidence" value="ECO:0007669"/>
    <property type="project" value="InterPro"/>
</dbReference>
<dbReference type="GO" id="GO:0042274">
    <property type="term" value="P:ribosomal small subunit biogenesis"/>
    <property type="evidence" value="ECO:0007669"/>
    <property type="project" value="UniProtKB-UniRule"/>
</dbReference>
<dbReference type="GO" id="GO:0006364">
    <property type="term" value="P:rRNA processing"/>
    <property type="evidence" value="ECO:0007669"/>
    <property type="project" value="UniProtKB-UniRule"/>
</dbReference>
<dbReference type="Gene3D" id="2.30.30.240">
    <property type="entry name" value="PRC-barrel domain"/>
    <property type="match status" value="1"/>
</dbReference>
<dbReference type="Gene3D" id="2.40.30.60">
    <property type="entry name" value="RimM"/>
    <property type="match status" value="1"/>
</dbReference>
<dbReference type="HAMAP" id="MF_00014">
    <property type="entry name" value="Ribosome_mat_RimM"/>
    <property type="match status" value="1"/>
</dbReference>
<dbReference type="InterPro" id="IPR011033">
    <property type="entry name" value="PRC_barrel-like_sf"/>
</dbReference>
<dbReference type="InterPro" id="IPR056792">
    <property type="entry name" value="PRC_RimM"/>
</dbReference>
<dbReference type="InterPro" id="IPR011961">
    <property type="entry name" value="RimM"/>
</dbReference>
<dbReference type="InterPro" id="IPR002676">
    <property type="entry name" value="RimM_N"/>
</dbReference>
<dbReference type="InterPro" id="IPR036976">
    <property type="entry name" value="RimM_N_sf"/>
</dbReference>
<dbReference type="InterPro" id="IPR009000">
    <property type="entry name" value="Transl_B-barrel_sf"/>
</dbReference>
<dbReference type="NCBIfam" id="TIGR02273">
    <property type="entry name" value="16S_RimM"/>
    <property type="match status" value="1"/>
</dbReference>
<dbReference type="PANTHER" id="PTHR33692">
    <property type="entry name" value="RIBOSOME MATURATION FACTOR RIMM"/>
    <property type="match status" value="1"/>
</dbReference>
<dbReference type="PANTHER" id="PTHR33692:SF1">
    <property type="entry name" value="RIBOSOME MATURATION FACTOR RIMM"/>
    <property type="match status" value="1"/>
</dbReference>
<dbReference type="Pfam" id="PF24986">
    <property type="entry name" value="PRC_RimM"/>
    <property type="match status" value="1"/>
</dbReference>
<dbReference type="Pfam" id="PF01782">
    <property type="entry name" value="RimM"/>
    <property type="match status" value="1"/>
</dbReference>
<dbReference type="SUPFAM" id="SSF50346">
    <property type="entry name" value="PRC-barrel domain"/>
    <property type="match status" value="1"/>
</dbReference>
<dbReference type="SUPFAM" id="SSF50447">
    <property type="entry name" value="Translation proteins"/>
    <property type="match status" value="1"/>
</dbReference>
<comment type="function">
    <text evidence="1">An accessory protein needed during the final step in the assembly of 30S ribosomal subunit, possibly for assembly of the head region. Essential for efficient processing of 16S rRNA. May be needed both before and after RbfA during the maturation of 16S rRNA. It has affinity for free ribosomal 30S subunits but not for 70S ribosomes.</text>
</comment>
<comment type="subunit">
    <text evidence="1">Binds ribosomal protein uS19.</text>
</comment>
<comment type="subcellular location">
    <subcellularLocation>
        <location evidence="1">Cytoplasm</location>
    </subcellularLocation>
</comment>
<comment type="domain">
    <text evidence="1">The PRC barrel domain binds ribosomal protein uS19.</text>
</comment>
<comment type="similarity">
    <text evidence="1">Belongs to the RimM family.</text>
</comment>
<accession>Q1MQV0</accession>
<proteinExistence type="inferred from homology"/>
<reference key="1">
    <citation type="submission" date="2005-11" db="EMBL/GenBank/DDBJ databases">
        <title>The complete genome sequence of Lawsonia intracellularis: the causative agent of proliferative enteropathy.</title>
        <authorList>
            <person name="Kaur K."/>
            <person name="Zhang Q."/>
            <person name="Beckler D."/>
            <person name="Munir S."/>
            <person name="Li L."/>
            <person name="Kinsley K."/>
            <person name="Herron L."/>
            <person name="Peterson A."/>
            <person name="May B."/>
            <person name="Singh S."/>
            <person name="Gebhart C."/>
            <person name="Kapur V."/>
        </authorList>
    </citation>
    <scope>NUCLEOTIDE SEQUENCE [LARGE SCALE GENOMIC DNA]</scope>
    <source>
        <strain>PHE/MN1-00</strain>
    </source>
</reference>
<protein>
    <recommendedName>
        <fullName evidence="1">Ribosome maturation factor RimM</fullName>
    </recommendedName>
</protein>
<feature type="chain" id="PRO_0000321735" description="Ribosome maturation factor RimM">
    <location>
        <begin position="1"/>
        <end position="173"/>
    </location>
</feature>
<feature type="domain" description="PRC barrel" evidence="1">
    <location>
        <begin position="94"/>
        <end position="168"/>
    </location>
</feature>
<name>RIMM_LAWIP</name>